<accession>Q9JJZ9</accession>
<reference key="1">
    <citation type="journal article" date="2000" name="J. Neurosci.">
        <title>Molecular cloning and functional characterization of a new modulatory cyclic nucleotide-gated channel subunit from mouse retina.</title>
        <authorList>
            <person name="Gerstner A."/>
            <person name="Zong X."/>
            <person name="Hofmann F."/>
            <person name="Biel M."/>
        </authorList>
    </citation>
    <scope>NUCLEOTIDE SEQUENCE [MRNA]</scope>
    <scope>FUNCTION</scope>
    <scope>SUBUNIT</scope>
    <scope>TISSUE SPECIFICITY</scope>
    <source>
        <strain>C57BL/6J</strain>
        <tissue>Retina</tissue>
    </source>
</reference>
<reference key="2">
    <citation type="journal article" date="2001" name="Science">
        <title>Nomenclature for ion channel subunits.</title>
        <authorList>
            <person name="Bradley J."/>
            <person name="Frings S."/>
            <person name="Yau K.W."/>
            <person name="Reed R."/>
        </authorList>
    </citation>
    <scope>NOMENCLATURE</scope>
</reference>
<feature type="chain" id="PRO_0000219321" description="Cyclic nucleotide-gated channel beta-3">
    <location>
        <begin position="1"/>
        <end position="694"/>
    </location>
</feature>
<feature type="topological domain" description="Cytoplasmic" evidence="7">
    <location>
        <begin position="1"/>
        <end position="210"/>
    </location>
</feature>
<feature type="transmembrane region" description="Helical; Name=S1" evidence="2">
    <location>
        <begin position="211"/>
        <end position="234"/>
    </location>
</feature>
<feature type="topological domain" description="Extracellular" evidence="7">
    <location>
        <begin position="235"/>
        <end position="241"/>
    </location>
</feature>
<feature type="transmembrane region" description="Helical; Name=S2" evidence="2">
    <location>
        <begin position="242"/>
        <end position="262"/>
    </location>
</feature>
<feature type="topological domain" description="Cytoplasmic" evidence="7">
    <location>
        <begin position="263"/>
        <end position="291"/>
    </location>
</feature>
<feature type="transmembrane region" description="Helical; Name=S3" evidence="2">
    <location>
        <begin position="292"/>
        <end position="309"/>
    </location>
</feature>
<feature type="topological domain" description="Extracellular" evidence="7">
    <location>
        <begin position="310"/>
        <end position="312"/>
    </location>
</feature>
<feature type="transmembrane region" description="Helical; Name=S4" evidence="2">
    <location>
        <begin position="313"/>
        <end position="327"/>
    </location>
</feature>
<feature type="topological domain" description="Cytoplasmic" evidence="7">
    <location>
        <begin position="328"/>
        <end position="340"/>
    </location>
</feature>
<feature type="transmembrane region" description="Helical; Name=S5" evidence="2">
    <location>
        <begin position="341"/>
        <end position="363"/>
    </location>
</feature>
<feature type="topological domain" description="Extracellular" evidence="7">
    <location>
        <begin position="364"/>
        <end position="385"/>
    </location>
</feature>
<feature type="transmembrane region" description="Helical; Name=P-helix" evidence="2">
    <location>
        <begin position="386"/>
        <end position="412"/>
    </location>
</feature>
<feature type="transmembrane region" description="Helical; Name=S6" evidence="2">
    <location>
        <begin position="413"/>
        <end position="437"/>
    </location>
</feature>
<feature type="topological domain" description="Cytoplasmic" evidence="7">
    <location>
        <begin position="438"/>
        <end position="694"/>
    </location>
</feature>
<feature type="region of interest" description="Disordered" evidence="4">
    <location>
        <begin position="24"/>
        <end position="82"/>
    </location>
</feature>
<feature type="region of interest" description="Disordered" evidence="4">
    <location>
        <begin position="146"/>
        <end position="177"/>
    </location>
</feature>
<feature type="region of interest" description="Ion conduction pathway" evidence="2">
    <location>
        <begin position="340"/>
        <end position="439"/>
    </location>
</feature>
<feature type="region of interest" description="Selectivity filter" evidence="2">
    <location>
        <begin position="399"/>
        <end position="402"/>
    </location>
</feature>
<feature type="region of interest" description="C-linker" evidence="2">
    <location>
        <begin position="442"/>
        <end position="518"/>
    </location>
</feature>
<feature type="region of interest" description="Cyclic nucleotide-binding domain" evidence="2">
    <location>
        <begin position="522"/>
        <end position="638"/>
    </location>
</feature>
<feature type="compositionally biased region" description="Polar residues" evidence="4">
    <location>
        <begin position="26"/>
        <end position="40"/>
    </location>
</feature>
<feature type="compositionally biased region" description="Polar residues" evidence="4">
    <location>
        <begin position="153"/>
        <end position="168"/>
    </location>
</feature>
<feature type="binding site" evidence="2">
    <location>
        <position position="583"/>
    </location>
    <ligand>
        <name>3',5'-cyclic GMP</name>
        <dbReference type="ChEBI" id="CHEBI:57746"/>
    </ligand>
</feature>
<feature type="binding site" evidence="2">
    <location>
        <position position="584"/>
    </location>
    <ligand>
        <name>3',5'-cyclic GMP</name>
        <dbReference type="ChEBI" id="CHEBI:57746"/>
    </ligand>
</feature>
<feature type="binding site" evidence="2">
    <location>
        <position position="596"/>
    </location>
    <ligand>
        <name>3',5'-cyclic GMP</name>
        <dbReference type="ChEBI" id="CHEBI:57746"/>
    </ligand>
</feature>
<feature type="binding site" evidence="2">
    <location>
        <position position="597"/>
    </location>
    <ligand>
        <name>3',5'-cyclic GMP</name>
        <dbReference type="ChEBI" id="CHEBI:57746"/>
    </ligand>
</feature>
<feature type="site" description="Central gate" evidence="2">
    <location>
        <position position="426"/>
    </location>
</feature>
<feature type="site" description="Central gate" evidence="2">
    <location>
        <position position="430"/>
    </location>
</feature>
<feature type="site" description="Occludes the pore below the central gate" evidence="2">
    <location>
        <position position="434"/>
    </location>
</feature>
<evidence type="ECO:0000250" key="1">
    <source>
        <dbReference type="UniProtKB" id="Q28181"/>
    </source>
</evidence>
<evidence type="ECO:0000250" key="2">
    <source>
        <dbReference type="UniProtKB" id="Q9NQW8"/>
    </source>
</evidence>
<evidence type="ECO:0000255" key="3"/>
<evidence type="ECO:0000256" key="4">
    <source>
        <dbReference type="SAM" id="MobiDB-lite"/>
    </source>
</evidence>
<evidence type="ECO:0000269" key="5">
    <source>
    </source>
</evidence>
<evidence type="ECO:0000303" key="6">
    <source>
    </source>
</evidence>
<evidence type="ECO:0000305" key="7"/>
<evidence type="ECO:0000312" key="8">
    <source>
        <dbReference type="MGI" id="MGI:1353562"/>
    </source>
</evidence>
<organism>
    <name type="scientific">Mus musculus</name>
    <name type="common">Mouse</name>
    <dbReference type="NCBI Taxonomy" id="10090"/>
    <lineage>
        <taxon>Eukaryota</taxon>
        <taxon>Metazoa</taxon>
        <taxon>Chordata</taxon>
        <taxon>Craniata</taxon>
        <taxon>Vertebrata</taxon>
        <taxon>Euteleostomi</taxon>
        <taxon>Mammalia</taxon>
        <taxon>Eutheria</taxon>
        <taxon>Euarchontoglires</taxon>
        <taxon>Glires</taxon>
        <taxon>Rodentia</taxon>
        <taxon>Myomorpha</taxon>
        <taxon>Muroidea</taxon>
        <taxon>Muridae</taxon>
        <taxon>Murinae</taxon>
        <taxon>Mus</taxon>
        <taxon>Mus</taxon>
    </lineage>
</organism>
<proteinExistence type="evidence at protein level"/>
<gene>
    <name evidence="6 8" type="primary">Cngb3</name>
    <name evidence="6" type="synonym">Cng6</name>
</gene>
<protein>
    <recommendedName>
        <fullName>Cyclic nucleotide-gated channel beta-3</fullName>
        <shortName>CNG channel beta-3</shortName>
    </recommendedName>
    <alternativeName>
        <fullName>Cone photoreceptor cGMP-gated channel subunit beta</fullName>
    </alternativeName>
    <alternativeName>
        <fullName>Cyclic nucleotide-gated cation channel beta-3</fullName>
    </alternativeName>
    <alternativeName>
        <fullName>Cyclic nucleotide-gated cation channel modulatory subunit</fullName>
    </alternativeName>
    <alternativeName>
        <fullName>Cyclic nucleotide-gated channel subunit CNG6</fullName>
    </alternativeName>
</protein>
<keyword id="KW-1003">Cell membrane</keyword>
<keyword id="KW-0140">cGMP</keyword>
<keyword id="KW-0142">cGMP-binding</keyword>
<keyword id="KW-0407">Ion channel</keyword>
<keyword id="KW-0406">Ion transport</keyword>
<keyword id="KW-1071">Ligand-gated ion channel</keyword>
<keyword id="KW-0472">Membrane</keyword>
<keyword id="KW-0547">Nucleotide-binding</keyword>
<keyword id="KW-1185">Reference proteome</keyword>
<keyword id="KW-0716">Sensory transduction</keyword>
<keyword id="KW-0812">Transmembrane</keyword>
<keyword id="KW-1133">Transmembrane helix</keyword>
<keyword id="KW-0813">Transport</keyword>
<keyword id="KW-0844">Vision</keyword>
<name>CNGB3_MOUSE</name>
<comment type="function">
    <text evidence="2 5">Pore-forming subunit of the cone cyclic nucleotide-gated channel. Mediates cone photoresponses at bright light converting transient changes in intracellular cGMP levels into electrical signals. In the dark, cGMP levels are high and keep the channel open enabling a steady inward current carried by Na(+) and Ca(2+) ions that leads to membrane depolarization and neurotransmitter release from synaptic terminals. Upon photon absorption cGMP levels decline leading to channel closure and membrane hyperpolarization that ultimately slows neurotransmitter release and signals the presence of light, the end point of the phototransduction cascade. Conducts cGMP- and cAMP-gated ion currents, with permeability for monovalent and divalent cations.</text>
</comment>
<comment type="catalytic activity">
    <reaction evidence="1">
        <text>Ca(2+)(in) = Ca(2+)(out)</text>
        <dbReference type="Rhea" id="RHEA:29671"/>
        <dbReference type="ChEBI" id="CHEBI:29108"/>
    </reaction>
</comment>
<comment type="catalytic activity">
    <reaction evidence="2">
        <text>Na(+)(in) = Na(+)(out)</text>
        <dbReference type="Rhea" id="RHEA:34963"/>
        <dbReference type="ChEBI" id="CHEBI:29101"/>
    </reaction>
</comment>
<comment type="catalytic activity">
    <reaction evidence="2">
        <text>K(+)(in) = K(+)(out)</text>
        <dbReference type="Rhea" id="RHEA:29463"/>
        <dbReference type="ChEBI" id="CHEBI:29103"/>
    </reaction>
</comment>
<comment type="catalytic activity">
    <reaction evidence="2">
        <text>NH4(+)(in) = NH4(+)(out)</text>
        <dbReference type="Rhea" id="RHEA:28747"/>
        <dbReference type="ChEBI" id="CHEBI:28938"/>
    </reaction>
</comment>
<comment type="catalytic activity">
    <reaction evidence="2">
        <text>Rb(+)(in) = Rb(+)(out)</text>
        <dbReference type="Rhea" id="RHEA:78547"/>
        <dbReference type="ChEBI" id="CHEBI:49847"/>
    </reaction>
</comment>
<comment type="catalytic activity">
    <reaction evidence="2">
        <text>Li(+)(in) = Li(+)(out)</text>
        <dbReference type="Rhea" id="RHEA:78551"/>
        <dbReference type="ChEBI" id="CHEBI:49713"/>
    </reaction>
</comment>
<comment type="catalytic activity">
    <reaction evidence="2">
        <text>Cs(+)(in) = Cs(+)(out)</text>
        <dbReference type="Rhea" id="RHEA:78555"/>
        <dbReference type="ChEBI" id="CHEBI:49547"/>
    </reaction>
</comment>
<comment type="subunit">
    <text evidence="2">Forms heterotetrameric channels composed of CNGA3 and CNGB3 subunits with 3:1 stoichiometry.</text>
</comment>
<comment type="subcellular location">
    <subcellularLocation>
        <location evidence="2">Cell membrane</location>
        <topology evidence="3">Multi-pass membrane protein</topology>
    </subcellularLocation>
</comment>
<comment type="tissue specificity">
    <text evidence="5">Small subset of retinal photoreceptor cells and testis.</text>
</comment>
<comment type="domain">
    <text evidence="2">The cyclic nucleotide-binding domain (CNBD) comprises three helices and a beta-roll of eight beta-strands from CNGA3 and CNGB3 subunits. Upon cNMP binding transmits the conformational changes to the C-linker domain of the S6 helix to open the ion conduction pathway.</text>
</comment>
<comment type="domain">
    <text evidence="2">The ion conduction pathway consists of S5, S6 and pore helices from CNGA3 and CNGB3 subunits. It contains a central hydrophobic gate that opens upon cNMP binding. CNGB1 displays an additional charged arginine gate below the central gate to regulate ion permeation.</text>
</comment>
<comment type="similarity">
    <text evidence="7">Belongs to the cyclic nucleotide-gated cation channel (TC 1.A.1.5) family. CNGB3 subfamily.</text>
</comment>
<dbReference type="EMBL" id="AJ243572">
    <property type="protein sequence ID" value="CAB71152.1"/>
    <property type="molecule type" value="mRNA"/>
</dbReference>
<dbReference type="CCDS" id="CCDS17990.1"/>
<dbReference type="RefSeq" id="NP_038955.1">
    <property type="nucleotide sequence ID" value="NM_013927.2"/>
</dbReference>
<dbReference type="SMR" id="Q9JJZ9"/>
<dbReference type="FunCoup" id="Q9JJZ9">
    <property type="interactions" value="345"/>
</dbReference>
<dbReference type="STRING" id="10090.ENSMUSP00000100064"/>
<dbReference type="GuidetoPHARMACOLOGY" id="399"/>
<dbReference type="GlyCosmos" id="Q9JJZ9">
    <property type="glycosylation" value="1 site, No reported glycans"/>
</dbReference>
<dbReference type="iPTMnet" id="Q9JJZ9"/>
<dbReference type="PhosphoSitePlus" id="Q9JJZ9"/>
<dbReference type="jPOST" id="Q9JJZ9"/>
<dbReference type="PaxDb" id="10090-ENSMUSP00000100064"/>
<dbReference type="PeptideAtlas" id="Q9JJZ9"/>
<dbReference type="Antibodypedia" id="59091">
    <property type="antibodies" value="113 antibodies from 24 providers"/>
</dbReference>
<dbReference type="DNASU" id="30952"/>
<dbReference type="Ensembl" id="ENSMUST00000102999.2">
    <property type="protein sequence ID" value="ENSMUSP00000100064.2"/>
    <property type="gene ID" value="ENSMUSG00000056494.8"/>
</dbReference>
<dbReference type="GeneID" id="30952"/>
<dbReference type="KEGG" id="mmu:30952"/>
<dbReference type="UCSC" id="uc008sbx.1">
    <property type="organism name" value="mouse"/>
</dbReference>
<dbReference type="AGR" id="MGI:1353562"/>
<dbReference type="CTD" id="54714"/>
<dbReference type="MGI" id="MGI:1353562">
    <property type="gene designation" value="Cngb3"/>
</dbReference>
<dbReference type="VEuPathDB" id="HostDB:ENSMUSG00000056494"/>
<dbReference type="eggNOG" id="KOG0499">
    <property type="taxonomic scope" value="Eukaryota"/>
</dbReference>
<dbReference type="GeneTree" id="ENSGT00940000154824"/>
<dbReference type="HOGENOM" id="CLU_005746_11_1_1"/>
<dbReference type="InParanoid" id="Q9JJZ9"/>
<dbReference type="OMA" id="FRVCMDH"/>
<dbReference type="OrthoDB" id="421226at2759"/>
<dbReference type="PhylomeDB" id="Q9JJZ9"/>
<dbReference type="TreeFam" id="TF318250"/>
<dbReference type="BioGRID-ORCS" id="30952">
    <property type="hits" value="2 hits in 80 CRISPR screens"/>
</dbReference>
<dbReference type="PRO" id="PR:Q9JJZ9"/>
<dbReference type="Proteomes" id="UP000000589">
    <property type="component" value="Chromosome 4"/>
</dbReference>
<dbReference type="RNAct" id="Q9JJZ9">
    <property type="molecule type" value="protein"/>
</dbReference>
<dbReference type="Bgee" id="ENSMUSG00000056494">
    <property type="expression patterns" value="Expressed in pineal body and 16 other cell types or tissues"/>
</dbReference>
<dbReference type="GO" id="GO:0001750">
    <property type="term" value="C:photoreceptor outer segment"/>
    <property type="evidence" value="ECO:0000314"/>
    <property type="project" value="MGI"/>
</dbReference>
<dbReference type="GO" id="GO:0005886">
    <property type="term" value="C:plasma membrane"/>
    <property type="evidence" value="ECO:0000305"/>
    <property type="project" value="MGI"/>
</dbReference>
<dbReference type="GO" id="GO:1902495">
    <property type="term" value="C:transmembrane transporter complex"/>
    <property type="evidence" value="ECO:0007669"/>
    <property type="project" value="Ensembl"/>
</dbReference>
<dbReference type="GO" id="GO:0030553">
    <property type="term" value="F:cGMP binding"/>
    <property type="evidence" value="ECO:0000305"/>
    <property type="project" value="MGI"/>
</dbReference>
<dbReference type="GO" id="GO:0005222">
    <property type="term" value="F:intracellularly cAMP-activated cation channel activity"/>
    <property type="evidence" value="ECO:0007669"/>
    <property type="project" value="Ensembl"/>
</dbReference>
<dbReference type="GO" id="GO:0005223">
    <property type="term" value="F:intracellularly cGMP-activated cation channel activity"/>
    <property type="evidence" value="ECO:0000353"/>
    <property type="project" value="MGI"/>
</dbReference>
<dbReference type="GO" id="GO:0007601">
    <property type="term" value="P:visual perception"/>
    <property type="evidence" value="ECO:0007669"/>
    <property type="project" value="UniProtKB-KW"/>
</dbReference>
<dbReference type="CDD" id="cd00038">
    <property type="entry name" value="CAP_ED"/>
    <property type="match status" value="1"/>
</dbReference>
<dbReference type="FunFam" id="1.10.287.70:FF:000072">
    <property type="entry name" value="Cyclic nucleotide gated channel beta 3"/>
    <property type="match status" value="1"/>
</dbReference>
<dbReference type="FunFam" id="1.10.287.630:FF:000001">
    <property type="entry name" value="Cyclic nucleotide-gated channel alpha 3"/>
    <property type="match status" value="1"/>
</dbReference>
<dbReference type="FunFam" id="2.60.120.10:FF:000020">
    <property type="entry name" value="Cyclic nucleotide-gated channel beta 3"/>
    <property type="match status" value="1"/>
</dbReference>
<dbReference type="Gene3D" id="1.10.287.70">
    <property type="match status" value="1"/>
</dbReference>
<dbReference type="Gene3D" id="1.10.287.630">
    <property type="entry name" value="Helix hairpin bin"/>
    <property type="match status" value="1"/>
</dbReference>
<dbReference type="Gene3D" id="2.60.120.10">
    <property type="entry name" value="Jelly Rolls"/>
    <property type="match status" value="1"/>
</dbReference>
<dbReference type="InterPro" id="IPR050866">
    <property type="entry name" value="CNG_cation_channel"/>
</dbReference>
<dbReference type="InterPro" id="IPR018488">
    <property type="entry name" value="cNMP-bd_CS"/>
</dbReference>
<dbReference type="InterPro" id="IPR000595">
    <property type="entry name" value="cNMP-bd_dom"/>
</dbReference>
<dbReference type="InterPro" id="IPR018490">
    <property type="entry name" value="cNMP-bd_dom_sf"/>
</dbReference>
<dbReference type="InterPro" id="IPR005821">
    <property type="entry name" value="Ion_trans_dom"/>
</dbReference>
<dbReference type="InterPro" id="IPR014710">
    <property type="entry name" value="RmlC-like_jellyroll"/>
</dbReference>
<dbReference type="PANTHER" id="PTHR45638:SF8">
    <property type="entry name" value="CYCLIC NUCLEOTIDE-GATED CATION CHANNEL BETA-3"/>
    <property type="match status" value="1"/>
</dbReference>
<dbReference type="PANTHER" id="PTHR45638">
    <property type="entry name" value="CYCLIC NUCLEOTIDE-GATED CATION CHANNEL SUBUNIT A"/>
    <property type="match status" value="1"/>
</dbReference>
<dbReference type="Pfam" id="PF00027">
    <property type="entry name" value="cNMP_binding"/>
    <property type="match status" value="1"/>
</dbReference>
<dbReference type="Pfam" id="PF00520">
    <property type="entry name" value="Ion_trans"/>
    <property type="match status" value="1"/>
</dbReference>
<dbReference type="SMART" id="SM00100">
    <property type="entry name" value="cNMP"/>
    <property type="match status" value="1"/>
</dbReference>
<dbReference type="SUPFAM" id="SSF51206">
    <property type="entry name" value="cAMP-binding domain-like"/>
    <property type="match status" value="1"/>
</dbReference>
<dbReference type="SUPFAM" id="SSF81324">
    <property type="entry name" value="Voltage-gated potassium channels"/>
    <property type="match status" value="1"/>
</dbReference>
<dbReference type="PROSITE" id="PS00888">
    <property type="entry name" value="CNMP_BINDING_1"/>
    <property type="match status" value="1"/>
</dbReference>
<dbReference type="PROSITE" id="PS00889">
    <property type="entry name" value="CNMP_BINDING_2"/>
    <property type="match status" value="1"/>
</dbReference>
<dbReference type="PROSITE" id="PS50042">
    <property type="entry name" value="CNMP_BINDING_3"/>
    <property type="match status" value="1"/>
</dbReference>
<sequence length="694" mass="79722">MLKSLTVKFNKVNPMEGRMEKKLCPNLSSLSQPTIAQGDNQSEKEPLRSRTPITFEKSHSKEDNSTGENSLRDFTPNPDPECRAELTRTMAEMEKTRTGKERPVSFKTKVLETSIINEYTDAHLHNLVERMRERTALYKKTLTEEENFPEVEASSQTAMSTNISPKQENNSKLKEHQDTFSFKPQRVPVKEHLRRMILPRSIDSYTDRVYLLWLLLVTIAYNWNCWLLPVRLVFPCQTPDNKNYWIITDIVCDIIYLCDILLIQPRLQFVRGGEIIVDSNELKRNYRSSTKFRMDVASLLPFEVLYIFFGVNPIFRANRILKYTSFFEFNHHLESIMDKAYVYRVIRTTGYLLFLLHINACVYYWASDYEGIGSTKWVYNGEGNKYLRCFYWAVRTLITIGGLPEPQTSFEIVFQFLNFFSGVFVFSSLIGQMRDVIGAATANQNYFQACMDHIIAYMNKYSIPQSVQYRVRTWLEYTWNSQRILDESNLLENLPTAMQLSIALDINFSIIDKVELFKGCDTQMIYDLLLRLKSTIYLPGDFVCKKGEIGKEMYIIKHGEVQVLGGPDGAQVLVTLKAGSVFGEISLLAKGGGNRRTADVVAHGFANLLTLDKKTLQEILLHYPTSKKLLMKKAKILLSQKGKTTQAIPARPGPAFLFPPKEETPRMLKVLLGNTGKVDLGRLLKGKRKTTTQK</sequence>